<proteinExistence type="evidence at protein level"/>
<feature type="signal peptide" evidence="1">
    <location>
        <begin position="1"/>
        <end position="34"/>
    </location>
</feature>
<feature type="chain" id="PRO_0000297615" description="Cell adhesion molecule CEACAM21">
    <location>
        <begin position="35"/>
        <end position="293"/>
    </location>
</feature>
<feature type="topological domain" description="Extracellular" evidence="1">
    <location>
        <begin position="35"/>
        <end position="240"/>
    </location>
</feature>
<feature type="transmembrane region" description="Helical" evidence="1">
    <location>
        <begin position="241"/>
        <end position="261"/>
    </location>
</feature>
<feature type="topological domain" description="Cytoplasmic" evidence="1">
    <location>
        <begin position="262"/>
        <end position="293"/>
    </location>
</feature>
<feature type="domain" description="Ig-like C2-type">
    <location>
        <begin position="147"/>
        <end position="231"/>
    </location>
</feature>
<feature type="region of interest" description="Disordered" evidence="3">
    <location>
        <begin position="267"/>
        <end position="293"/>
    </location>
</feature>
<feature type="glycosylation site" description="N-linked (GlcNAc...) asparagine" evidence="1">
    <location>
        <position position="111"/>
    </location>
</feature>
<feature type="disulfide bond" evidence="2">
    <location>
        <begin position="166"/>
        <end position="214"/>
    </location>
</feature>
<feature type="splice variant" id="VSP_027303" description="In isoform 3." evidence="6">
    <original>ESVAQPSIQASSTTVTEKGSVVLTCHTNNTGTSFQWIFNNQRLQVTKRMKLSWFNHVLTIDPIRQEDAGEYQCEVSNPVSSNRSDPLKLTVKSDDNTLGILIGVLVGSLLVAALVCFLLLRKTGRASDQSDFREQQPPASTPGHGPSDSSIS</original>
    <variation>GECSKFDSEISEDAAWPQDTFCWSLYPQSQWLSPPSKPAAPQSQRRAPWS</variation>
    <location>
        <begin position="142"/>
        <end position="293"/>
    </location>
</feature>
<feature type="splice variant" id="VSP_027304" description="In isoform 2." evidence="5">
    <original>SD</original>
    <variation>Y</variation>
    <location>
        <begin position="234"/>
        <end position="235"/>
    </location>
</feature>
<feature type="sequence variant" id="VAR_034651" description="In dbSNP:rs714106." evidence="4">
    <original>N</original>
    <variation>T</variation>
    <location>
        <position position="121"/>
    </location>
</feature>
<feature type="sequence variant" id="VAR_034652" description="In dbSNP:rs2302188." evidence="4">
    <original>V</original>
    <variation>M</variation>
    <location>
        <position position="198"/>
    </location>
</feature>
<sequence length="293" mass="32354">MGPPSACPHRECIPWQGLLLTASLLTFWNAPTTAWLFIASAPFEVAEGENVHLSVVYLPENLYSYGWYKGKTVEPNQLIAAYVIDTHVRTPGPAYSGRETISPSGDLHFQNVTLEDTGYYNLQVTYRNSQIEQASHHLRVYESVAQPSIQASSTTVTEKGSVVLTCHTNNTGTSFQWIFNNQRLQVTKRMKLSWFNHVLTIDPIRQEDAGEYQCEVSNPVSSNRSDPLKLTVKSDDNTLGILIGVLVGSLLVAALVCFLLLRKTGRASDQSDFREQQPPASTPGHGPSDSSIS</sequence>
<evidence type="ECO:0000255" key="1"/>
<evidence type="ECO:0000255" key="2">
    <source>
        <dbReference type="PROSITE-ProRule" id="PRU00114"/>
    </source>
</evidence>
<evidence type="ECO:0000256" key="3">
    <source>
        <dbReference type="SAM" id="MobiDB-lite"/>
    </source>
</evidence>
<evidence type="ECO:0000269" key="4">
    <source>
    </source>
</evidence>
<evidence type="ECO:0000303" key="5">
    <source>
    </source>
</evidence>
<evidence type="ECO:0000303" key="6">
    <source>
    </source>
</evidence>
<evidence type="ECO:0000305" key="7"/>
<evidence type="ECO:0000312" key="8">
    <source>
        <dbReference type="HGNC" id="HGNC:28834"/>
    </source>
</evidence>
<name>CEA21_HUMAN</name>
<accession>Q3KPI0</accession>
<accession>B7WNQ6</accession>
<accession>O75296</accession>
<accession>Q6UY47</accession>
<accession>Q96ER7</accession>
<organism>
    <name type="scientific">Homo sapiens</name>
    <name type="common">Human</name>
    <dbReference type="NCBI Taxonomy" id="9606"/>
    <lineage>
        <taxon>Eukaryota</taxon>
        <taxon>Metazoa</taxon>
        <taxon>Chordata</taxon>
        <taxon>Craniata</taxon>
        <taxon>Vertebrata</taxon>
        <taxon>Euteleostomi</taxon>
        <taxon>Mammalia</taxon>
        <taxon>Eutheria</taxon>
        <taxon>Euarchontoglires</taxon>
        <taxon>Primates</taxon>
        <taxon>Haplorrhini</taxon>
        <taxon>Catarrhini</taxon>
        <taxon>Hominidae</taxon>
        <taxon>Homo</taxon>
    </lineage>
</organism>
<comment type="subcellular location">
    <subcellularLocation>
        <location evidence="7">Membrane</location>
        <topology evidence="7">Single-pass type I membrane protein</topology>
    </subcellularLocation>
</comment>
<comment type="alternative products">
    <event type="alternative splicing"/>
    <isoform>
        <id>Q3KPI0-1</id>
        <name>1</name>
        <sequence type="displayed"/>
    </isoform>
    <isoform>
        <id>Q3KPI0-2</id>
        <name>2</name>
        <sequence type="described" ref="VSP_027304"/>
    </isoform>
    <isoform>
        <id>Q3KPI0-3</id>
        <name>3</name>
        <sequence type="described" ref="VSP_027303"/>
    </isoform>
</comment>
<comment type="similarity">
    <text evidence="7">Belongs to the immunoglobulin superfamily. CEA family.</text>
</comment>
<comment type="sequence caution" evidence="7">
    <conflict type="erroneous gene model prediction">
        <sequence resource="EMBL-CDS" id="AAC34569"/>
    </conflict>
</comment>
<gene>
    <name evidence="8" type="primary">CEACAM21</name>
    <name type="ORF">UNQ3098/PRO10075</name>
</gene>
<protein>
    <recommendedName>
        <fullName evidence="7">Cell adhesion molecule CEACAM21</fullName>
    </recommendedName>
    <alternativeName>
        <fullName>Carcinoembryonic antigen-related cell adhesion molecule 21</fullName>
        <shortName evidence="8">CEA cell adhesion molecule 21</shortName>
    </alternativeName>
</protein>
<keyword id="KW-0025">Alternative splicing</keyword>
<keyword id="KW-1015">Disulfide bond</keyword>
<keyword id="KW-0325">Glycoprotein</keyword>
<keyword id="KW-0393">Immunoglobulin domain</keyword>
<keyword id="KW-0472">Membrane</keyword>
<keyword id="KW-1267">Proteomics identification</keyword>
<keyword id="KW-1185">Reference proteome</keyword>
<keyword id="KW-0732">Signal</keyword>
<keyword id="KW-0812">Transmembrane</keyword>
<keyword id="KW-1133">Transmembrane helix</keyword>
<dbReference type="EMBL" id="AY358084">
    <property type="protein sequence ID" value="AAQ88451.1"/>
    <property type="molecule type" value="mRNA"/>
</dbReference>
<dbReference type="EMBL" id="AC005626">
    <property type="protein sequence ID" value="AAC34569.1"/>
    <property type="status" value="ALT_SEQ"/>
    <property type="molecule type" value="Genomic_DNA"/>
</dbReference>
<dbReference type="EMBL" id="AC243960">
    <property type="status" value="NOT_ANNOTATED_CDS"/>
    <property type="molecule type" value="Genomic_DNA"/>
</dbReference>
<dbReference type="EMBL" id="BC012001">
    <property type="protein sequence ID" value="AAH12001.1"/>
    <property type="molecule type" value="mRNA"/>
</dbReference>
<dbReference type="EMBL" id="BC106727">
    <property type="protein sequence ID" value="AAI06728.1"/>
    <property type="molecule type" value="mRNA"/>
</dbReference>
<dbReference type="CCDS" id="CCDS46086.1">
    <molecule id="Q3KPI0-1"/>
</dbReference>
<dbReference type="CCDS" id="CCDS46087.1">
    <molecule id="Q3KPI0-2"/>
</dbReference>
<dbReference type="RefSeq" id="NP_001091976.3">
    <molecule id="Q3KPI0-1"/>
    <property type="nucleotide sequence ID" value="NM_001098506.4"/>
</dbReference>
<dbReference type="RefSeq" id="NP_001275702.2">
    <property type="nucleotide sequence ID" value="NM_001288773.2"/>
</dbReference>
<dbReference type="RefSeq" id="NP_001277042.1">
    <property type="nucleotide sequence ID" value="NM_001290113.1"/>
</dbReference>
<dbReference type="RefSeq" id="NP_291021.4">
    <molecule id="Q3KPI0-2"/>
    <property type="nucleotide sequence ID" value="NM_033543.5"/>
</dbReference>
<dbReference type="RefSeq" id="XP_005278453.1">
    <property type="nucleotide sequence ID" value="XM_005278396.4"/>
</dbReference>
<dbReference type="RefSeq" id="XP_005278454.1">
    <molecule id="Q3KPI0-2"/>
    <property type="nucleotide sequence ID" value="XM_005278397.5"/>
</dbReference>
<dbReference type="RefSeq" id="XP_047295566.1">
    <molecule id="Q3KPI0-3"/>
    <property type="nucleotide sequence ID" value="XM_047439610.1"/>
</dbReference>
<dbReference type="RefSeq" id="XP_054178485.1">
    <molecule id="Q3KPI0-2"/>
    <property type="nucleotide sequence ID" value="XM_054322510.1"/>
</dbReference>
<dbReference type="RefSeq" id="XP_054178487.1">
    <molecule id="Q3KPI0-3"/>
    <property type="nucleotide sequence ID" value="XM_054322512.1"/>
</dbReference>
<dbReference type="RefSeq" id="XP_054185409.1">
    <molecule id="Q3KPI0-2"/>
    <property type="nucleotide sequence ID" value="XM_054329434.1"/>
</dbReference>
<dbReference type="RefSeq" id="XP_054185411.1">
    <molecule id="Q3KPI0-3"/>
    <property type="nucleotide sequence ID" value="XM_054329436.1"/>
</dbReference>
<dbReference type="SMR" id="Q3KPI0"/>
<dbReference type="BioGRID" id="124686">
    <property type="interactions" value="87"/>
</dbReference>
<dbReference type="FunCoup" id="Q3KPI0">
    <property type="interactions" value="115"/>
</dbReference>
<dbReference type="IntAct" id="Q3KPI0">
    <property type="interactions" value="68"/>
</dbReference>
<dbReference type="STRING" id="9606.ENSP00000385739"/>
<dbReference type="GlyCosmos" id="Q3KPI0">
    <property type="glycosylation" value="1 site, No reported glycans"/>
</dbReference>
<dbReference type="GlyGen" id="Q3KPI0">
    <property type="glycosylation" value="2 sites"/>
</dbReference>
<dbReference type="iPTMnet" id="Q3KPI0"/>
<dbReference type="PhosphoSitePlus" id="Q3KPI0"/>
<dbReference type="BioMuta" id="CEACAM21"/>
<dbReference type="DMDM" id="156630480"/>
<dbReference type="jPOST" id="Q3KPI0"/>
<dbReference type="MassIVE" id="Q3KPI0"/>
<dbReference type="PaxDb" id="9606-ENSP00000385739"/>
<dbReference type="PeptideAtlas" id="Q3KPI0"/>
<dbReference type="ProteomicsDB" id="61718">
    <molecule id="Q3KPI0-1"/>
</dbReference>
<dbReference type="ProteomicsDB" id="61719">
    <molecule id="Q3KPI0-2"/>
</dbReference>
<dbReference type="ProteomicsDB" id="61720">
    <molecule id="Q3KPI0-3"/>
</dbReference>
<dbReference type="TopDownProteomics" id="Q3KPI0-2">
    <molecule id="Q3KPI0-2"/>
</dbReference>
<dbReference type="Antibodypedia" id="30791">
    <property type="antibodies" value="150 antibodies from 24 providers"/>
</dbReference>
<dbReference type="DNASU" id="90273"/>
<dbReference type="Ensembl" id="ENST00000187608.13">
    <molecule id="Q3KPI0-2"/>
    <property type="protein sequence ID" value="ENSP00000187608.9"/>
    <property type="gene ID" value="ENSG00000007129.18"/>
</dbReference>
<dbReference type="Ensembl" id="ENST00000401445.4">
    <molecule id="Q3KPI0-1"/>
    <property type="protein sequence ID" value="ENSP00000385739.2"/>
    <property type="gene ID" value="ENSG00000007129.18"/>
</dbReference>
<dbReference type="Ensembl" id="ENST00000457737.5">
    <molecule id="Q3KPI0-3"/>
    <property type="protein sequence ID" value="ENSP00000390697.1"/>
    <property type="gene ID" value="ENSG00000007129.18"/>
</dbReference>
<dbReference type="Ensembl" id="ENST00000611554.3">
    <molecule id="Q3KPI0-2"/>
    <property type="protein sequence ID" value="ENSP00000483598.2"/>
    <property type="gene ID" value="ENSG00000278565.4"/>
</dbReference>
<dbReference type="Ensembl" id="ENST00000627877.2">
    <molecule id="Q3KPI0-3"/>
    <property type="protein sequence ID" value="ENSP00000487327.1"/>
    <property type="gene ID" value="ENSG00000278565.4"/>
</dbReference>
<dbReference type="Ensembl" id="ENST00000629689.1">
    <molecule id="Q3KPI0-1"/>
    <property type="protein sequence ID" value="ENSP00000487532.1"/>
    <property type="gene ID" value="ENSG00000278565.4"/>
</dbReference>
<dbReference type="GeneID" id="90273"/>
<dbReference type="KEGG" id="hsa:90273"/>
<dbReference type="MANE-Select" id="ENST00000401445.4">
    <property type="protein sequence ID" value="ENSP00000385739.2"/>
    <property type="RefSeq nucleotide sequence ID" value="NM_001098506.4"/>
    <property type="RefSeq protein sequence ID" value="NP_001091976.3"/>
</dbReference>
<dbReference type="UCSC" id="uc002ore.5">
    <molecule id="Q3KPI0-1"/>
    <property type="organism name" value="human"/>
</dbReference>
<dbReference type="AGR" id="HGNC:28834"/>
<dbReference type="CTD" id="90273"/>
<dbReference type="DisGeNET" id="90273"/>
<dbReference type="GeneCards" id="CEACAM21"/>
<dbReference type="HGNC" id="HGNC:28834">
    <property type="gene designation" value="CEACAM21"/>
</dbReference>
<dbReference type="HPA" id="ENSG00000007129">
    <property type="expression patterns" value="Tissue enhanced (bone marrow, lymphoid tissue)"/>
</dbReference>
<dbReference type="MIM" id="618191">
    <property type="type" value="gene"/>
</dbReference>
<dbReference type="neXtProt" id="NX_Q3KPI0"/>
<dbReference type="OpenTargets" id="ENSG00000007129"/>
<dbReference type="PharmGKB" id="PA142672135"/>
<dbReference type="VEuPathDB" id="HostDB:ENSG00000007129"/>
<dbReference type="eggNOG" id="ENOG502T1YP">
    <property type="taxonomic scope" value="Eukaryota"/>
</dbReference>
<dbReference type="GeneTree" id="ENSGT01100000263479"/>
<dbReference type="HOGENOM" id="CLU_024555_6_0_1"/>
<dbReference type="InParanoid" id="Q3KPI0"/>
<dbReference type="OMA" id="ARPHREC"/>
<dbReference type="OrthoDB" id="6353782at2759"/>
<dbReference type="PAN-GO" id="Q3KPI0">
    <property type="GO annotations" value="0 GO annotations based on evolutionary models"/>
</dbReference>
<dbReference type="PhylomeDB" id="Q3KPI0"/>
<dbReference type="TreeFam" id="TF336859"/>
<dbReference type="PathwayCommons" id="Q3KPI0"/>
<dbReference type="SignaLink" id="Q3KPI0"/>
<dbReference type="BioGRID-ORCS" id="90273">
    <property type="hits" value="7 hits in 1142 CRISPR screens"/>
</dbReference>
<dbReference type="ChiTaRS" id="CEACAM21">
    <property type="organism name" value="human"/>
</dbReference>
<dbReference type="GenomeRNAi" id="90273"/>
<dbReference type="Pharos" id="Q3KPI0">
    <property type="development level" value="Tdark"/>
</dbReference>
<dbReference type="PRO" id="PR:Q3KPI0"/>
<dbReference type="Proteomes" id="UP000005640">
    <property type="component" value="Chromosome 19"/>
</dbReference>
<dbReference type="RNAct" id="Q3KPI0">
    <property type="molecule type" value="protein"/>
</dbReference>
<dbReference type="Bgee" id="ENSG00000007129">
    <property type="expression patterns" value="Expressed in lymph node and 97 other cell types or tissues"/>
</dbReference>
<dbReference type="ExpressionAtlas" id="Q3KPI0">
    <property type="expression patterns" value="baseline and differential"/>
</dbReference>
<dbReference type="GO" id="GO:0009897">
    <property type="term" value="C:external side of plasma membrane"/>
    <property type="evidence" value="ECO:0000318"/>
    <property type="project" value="GO_Central"/>
</dbReference>
<dbReference type="GO" id="GO:0006955">
    <property type="term" value="P:immune response"/>
    <property type="evidence" value="ECO:0000318"/>
    <property type="project" value="GO_Central"/>
</dbReference>
<dbReference type="GO" id="GO:0042110">
    <property type="term" value="P:T cell activation"/>
    <property type="evidence" value="ECO:0000318"/>
    <property type="project" value="GO_Central"/>
</dbReference>
<dbReference type="CDD" id="cd05740">
    <property type="entry name" value="IgI_hCEACAM_2_4_6_like"/>
    <property type="match status" value="1"/>
</dbReference>
<dbReference type="CDD" id="cd05774">
    <property type="entry name" value="IgV_CEACAM_D1"/>
    <property type="match status" value="1"/>
</dbReference>
<dbReference type="FunFam" id="2.60.40.10:FF:000244">
    <property type="entry name" value="carcinoembryonic antigen-related cell adhesion molecule 16"/>
    <property type="match status" value="1"/>
</dbReference>
<dbReference type="Gene3D" id="2.60.40.10">
    <property type="entry name" value="Immunoglobulins"/>
    <property type="match status" value="2"/>
</dbReference>
<dbReference type="InterPro" id="IPR050831">
    <property type="entry name" value="CEA_cell_adhesion"/>
</dbReference>
<dbReference type="InterPro" id="IPR007110">
    <property type="entry name" value="Ig-like_dom"/>
</dbReference>
<dbReference type="InterPro" id="IPR036179">
    <property type="entry name" value="Ig-like_dom_sf"/>
</dbReference>
<dbReference type="InterPro" id="IPR013783">
    <property type="entry name" value="Ig-like_fold"/>
</dbReference>
<dbReference type="InterPro" id="IPR003599">
    <property type="entry name" value="Ig_sub"/>
</dbReference>
<dbReference type="InterPro" id="IPR003598">
    <property type="entry name" value="Ig_sub2"/>
</dbReference>
<dbReference type="InterPro" id="IPR013106">
    <property type="entry name" value="Ig_V-set"/>
</dbReference>
<dbReference type="PANTHER" id="PTHR44427:SF1">
    <property type="entry name" value="CARCINOEMBRYONIC ANTIGEN-RELATED CELL ADHESION MOLECULE 1"/>
    <property type="match status" value="1"/>
</dbReference>
<dbReference type="PANTHER" id="PTHR44427">
    <property type="entry name" value="CARCINOEMBRYONIC ANTIGEN-RELATED CELL ADHESION MOLECULE 19"/>
    <property type="match status" value="1"/>
</dbReference>
<dbReference type="Pfam" id="PF13927">
    <property type="entry name" value="Ig_3"/>
    <property type="match status" value="1"/>
</dbReference>
<dbReference type="Pfam" id="PF07686">
    <property type="entry name" value="V-set"/>
    <property type="match status" value="1"/>
</dbReference>
<dbReference type="SMART" id="SM00409">
    <property type="entry name" value="IG"/>
    <property type="match status" value="2"/>
</dbReference>
<dbReference type="SMART" id="SM00408">
    <property type="entry name" value="IGc2"/>
    <property type="match status" value="1"/>
</dbReference>
<dbReference type="SUPFAM" id="SSF48726">
    <property type="entry name" value="Immunoglobulin"/>
    <property type="match status" value="2"/>
</dbReference>
<dbReference type="PROSITE" id="PS50835">
    <property type="entry name" value="IG_LIKE"/>
    <property type="match status" value="1"/>
</dbReference>
<reference key="1">
    <citation type="journal article" date="2003" name="Genome Res.">
        <title>The secreted protein discovery initiative (SPDI), a large-scale effort to identify novel human secreted and transmembrane proteins: a bioinformatics assessment.</title>
        <authorList>
            <person name="Clark H.F."/>
            <person name="Gurney A.L."/>
            <person name="Abaya E."/>
            <person name="Baker K."/>
            <person name="Baldwin D.T."/>
            <person name="Brush J."/>
            <person name="Chen J."/>
            <person name="Chow B."/>
            <person name="Chui C."/>
            <person name="Crowley C."/>
            <person name="Currell B."/>
            <person name="Deuel B."/>
            <person name="Dowd P."/>
            <person name="Eaton D."/>
            <person name="Foster J.S."/>
            <person name="Grimaldi C."/>
            <person name="Gu Q."/>
            <person name="Hass P.E."/>
            <person name="Heldens S."/>
            <person name="Huang A."/>
            <person name="Kim H.S."/>
            <person name="Klimowski L."/>
            <person name="Jin Y."/>
            <person name="Johnson S."/>
            <person name="Lee J."/>
            <person name="Lewis L."/>
            <person name="Liao D."/>
            <person name="Mark M.R."/>
            <person name="Robbie E."/>
            <person name="Sanchez C."/>
            <person name="Schoenfeld J."/>
            <person name="Seshagiri S."/>
            <person name="Simmons L."/>
            <person name="Singh J."/>
            <person name="Smith V."/>
            <person name="Stinson J."/>
            <person name="Vagts A."/>
            <person name="Vandlen R.L."/>
            <person name="Watanabe C."/>
            <person name="Wieand D."/>
            <person name="Woods K."/>
            <person name="Xie M.-H."/>
            <person name="Yansura D.G."/>
            <person name="Yi S."/>
            <person name="Yu G."/>
            <person name="Yuan J."/>
            <person name="Zhang M."/>
            <person name="Zhang Z."/>
            <person name="Goddard A.D."/>
            <person name="Wood W.I."/>
            <person name="Godowski P.J."/>
            <person name="Gray A.M."/>
        </authorList>
    </citation>
    <scope>NUCLEOTIDE SEQUENCE [LARGE SCALE MRNA] (ISOFORM 2)</scope>
</reference>
<reference key="2">
    <citation type="journal article" date="2004" name="Nature">
        <title>The DNA sequence and biology of human chromosome 19.</title>
        <authorList>
            <person name="Grimwood J."/>
            <person name="Gordon L.A."/>
            <person name="Olsen A.S."/>
            <person name="Terry A."/>
            <person name="Schmutz J."/>
            <person name="Lamerdin J.E."/>
            <person name="Hellsten U."/>
            <person name="Goodstein D."/>
            <person name="Couronne O."/>
            <person name="Tran-Gyamfi M."/>
            <person name="Aerts A."/>
            <person name="Altherr M."/>
            <person name="Ashworth L."/>
            <person name="Bajorek E."/>
            <person name="Black S."/>
            <person name="Branscomb E."/>
            <person name="Caenepeel S."/>
            <person name="Carrano A.V."/>
            <person name="Caoile C."/>
            <person name="Chan Y.M."/>
            <person name="Christensen M."/>
            <person name="Cleland C.A."/>
            <person name="Copeland A."/>
            <person name="Dalin E."/>
            <person name="Dehal P."/>
            <person name="Denys M."/>
            <person name="Detter J.C."/>
            <person name="Escobar J."/>
            <person name="Flowers D."/>
            <person name="Fotopulos D."/>
            <person name="Garcia C."/>
            <person name="Georgescu A.M."/>
            <person name="Glavina T."/>
            <person name="Gomez M."/>
            <person name="Gonzales E."/>
            <person name="Groza M."/>
            <person name="Hammon N."/>
            <person name="Hawkins T."/>
            <person name="Haydu L."/>
            <person name="Ho I."/>
            <person name="Huang W."/>
            <person name="Israni S."/>
            <person name="Jett J."/>
            <person name="Kadner K."/>
            <person name="Kimball H."/>
            <person name="Kobayashi A."/>
            <person name="Larionov V."/>
            <person name="Leem S.-H."/>
            <person name="Lopez F."/>
            <person name="Lou Y."/>
            <person name="Lowry S."/>
            <person name="Malfatti S."/>
            <person name="Martinez D."/>
            <person name="McCready P.M."/>
            <person name="Medina C."/>
            <person name="Morgan J."/>
            <person name="Nelson K."/>
            <person name="Nolan M."/>
            <person name="Ovcharenko I."/>
            <person name="Pitluck S."/>
            <person name="Pollard M."/>
            <person name="Popkie A.P."/>
            <person name="Predki P."/>
            <person name="Quan G."/>
            <person name="Ramirez L."/>
            <person name="Rash S."/>
            <person name="Retterer J."/>
            <person name="Rodriguez A."/>
            <person name="Rogers S."/>
            <person name="Salamov A."/>
            <person name="Salazar A."/>
            <person name="She X."/>
            <person name="Smith D."/>
            <person name="Slezak T."/>
            <person name="Solovyev V."/>
            <person name="Thayer N."/>
            <person name="Tice H."/>
            <person name="Tsai M."/>
            <person name="Ustaszewska A."/>
            <person name="Vo N."/>
            <person name="Wagner M."/>
            <person name="Wheeler J."/>
            <person name="Wu K."/>
            <person name="Xie G."/>
            <person name="Yang J."/>
            <person name="Dubchak I."/>
            <person name="Furey T.S."/>
            <person name="DeJong P."/>
            <person name="Dickson M."/>
            <person name="Gordon D."/>
            <person name="Eichler E.E."/>
            <person name="Pennacchio L.A."/>
            <person name="Richardson P."/>
            <person name="Stubbs L."/>
            <person name="Rokhsar D.S."/>
            <person name="Myers R.M."/>
            <person name="Rubin E.M."/>
            <person name="Lucas S.M."/>
        </authorList>
    </citation>
    <scope>NUCLEOTIDE SEQUENCE [LARGE SCALE GENOMIC DNA]</scope>
    <scope>VARIANTS THR-121 AND MET-198</scope>
</reference>
<reference key="3">
    <citation type="journal article" date="2004" name="Genome Res.">
        <title>The status, quality, and expansion of the NIH full-length cDNA project: the Mammalian Gene Collection (MGC).</title>
        <authorList>
            <consortium name="The MGC Project Team"/>
        </authorList>
    </citation>
    <scope>NUCLEOTIDE SEQUENCE [LARGE SCALE MRNA] (ISOFORMS 1 AND 3)</scope>
    <source>
        <tissue>Testis</tissue>
    </source>
</reference>